<protein>
    <recommendedName>
        <fullName evidence="1">Probable sugar efflux transporter</fullName>
    </recommendedName>
</protein>
<name>SOTB_ECO27</name>
<comment type="function">
    <text evidence="1">Involved in the efflux of sugars. The physiological role may be the reduction of the intracellular concentration of toxic sugars or sugar metabolites.</text>
</comment>
<comment type="subcellular location">
    <subcellularLocation>
        <location evidence="1">Cell inner membrane</location>
        <topology evidence="1">Multi-pass membrane protein</topology>
    </subcellularLocation>
</comment>
<comment type="similarity">
    <text evidence="1">Belongs to the major facilitator superfamily. SotB (TC 2.A.1.2) family.</text>
</comment>
<reference key="1">
    <citation type="journal article" date="2009" name="J. Bacteriol.">
        <title>Complete genome sequence and comparative genome analysis of enteropathogenic Escherichia coli O127:H6 strain E2348/69.</title>
        <authorList>
            <person name="Iguchi A."/>
            <person name="Thomson N.R."/>
            <person name="Ogura Y."/>
            <person name="Saunders D."/>
            <person name="Ooka T."/>
            <person name="Henderson I.R."/>
            <person name="Harris D."/>
            <person name="Asadulghani M."/>
            <person name="Kurokawa K."/>
            <person name="Dean P."/>
            <person name="Kenny B."/>
            <person name="Quail M.A."/>
            <person name="Thurston S."/>
            <person name="Dougan G."/>
            <person name="Hayashi T."/>
            <person name="Parkhill J."/>
            <person name="Frankel G."/>
        </authorList>
    </citation>
    <scope>NUCLEOTIDE SEQUENCE [LARGE SCALE GENOMIC DNA]</scope>
    <source>
        <strain>E2348/69 / EPEC</strain>
    </source>
</reference>
<organism>
    <name type="scientific">Escherichia coli O127:H6 (strain E2348/69 / EPEC)</name>
    <dbReference type="NCBI Taxonomy" id="574521"/>
    <lineage>
        <taxon>Bacteria</taxon>
        <taxon>Pseudomonadati</taxon>
        <taxon>Pseudomonadota</taxon>
        <taxon>Gammaproteobacteria</taxon>
        <taxon>Enterobacterales</taxon>
        <taxon>Enterobacteriaceae</taxon>
        <taxon>Escherichia</taxon>
    </lineage>
</organism>
<feature type="chain" id="PRO_1000197457" description="Probable sugar efflux transporter">
    <location>
        <begin position="1"/>
        <end position="396"/>
    </location>
</feature>
<feature type="transmembrane region" description="Helical" evidence="1">
    <location>
        <begin position="15"/>
        <end position="35"/>
    </location>
</feature>
<feature type="transmembrane region" description="Helical" evidence="1">
    <location>
        <begin position="50"/>
        <end position="70"/>
    </location>
</feature>
<feature type="transmembrane region" description="Helical" evidence="1">
    <location>
        <begin position="81"/>
        <end position="101"/>
    </location>
</feature>
<feature type="transmembrane region" description="Helical" evidence="1">
    <location>
        <begin position="103"/>
        <end position="123"/>
    </location>
</feature>
<feature type="transmembrane region" description="Helical" evidence="1">
    <location>
        <begin position="136"/>
        <end position="156"/>
    </location>
</feature>
<feature type="transmembrane region" description="Helical" evidence="1">
    <location>
        <begin position="170"/>
        <end position="190"/>
    </location>
</feature>
<feature type="transmembrane region" description="Helical" evidence="1">
    <location>
        <begin position="209"/>
        <end position="229"/>
    </location>
</feature>
<feature type="transmembrane region" description="Helical" evidence="1">
    <location>
        <begin position="246"/>
        <end position="266"/>
    </location>
</feature>
<feature type="transmembrane region" description="Helical" evidence="1">
    <location>
        <begin position="275"/>
        <end position="295"/>
    </location>
</feature>
<feature type="transmembrane region" description="Helical" evidence="1">
    <location>
        <begin position="299"/>
        <end position="319"/>
    </location>
</feature>
<feature type="transmembrane region" description="Helical" evidence="1">
    <location>
        <begin position="333"/>
        <end position="353"/>
    </location>
</feature>
<feature type="transmembrane region" description="Helical" evidence="1">
    <location>
        <begin position="364"/>
        <end position="384"/>
    </location>
</feature>
<gene>
    <name evidence="1" type="primary">sotB</name>
    <name type="ordered locus">E2348C_1648</name>
</gene>
<dbReference type="EMBL" id="FM180568">
    <property type="protein sequence ID" value="CAS09196.1"/>
    <property type="molecule type" value="Genomic_DNA"/>
</dbReference>
<dbReference type="SMR" id="B7URQ4"/>
<dbReference type="KEGG" id="ecg:E2348C_1648"/>
<dbReference type="HOGENOM" id="CLU_001265_61_1_6"/>
<dbReference type="Proteomes" id="UP000008205">
    <property type="component" value="Chromosome"/>
</dbReference>
<dbReference type="GO" id="GO:0005886">
    <property type="term" value="C:plasma membrane"/>
    <property type="evidence" value="ECO:0007669"/>
    <property type="project" value="UniProtKB-SubCell"/>
</dbReference>
<dbReference type="GO" id="GO:0015144">
    <property type="term" value="F:carbohydrate transmembrane transporter activity"/>
    <property type="evidence" value="ECO:0007669"/>
    <property type="project" value="UniProtKB-UniRule"/>
</dbReference>
<dbReference type="CDD" id="cd17324">
    <property type="entry name" value="MFS_NepI_like"/>
    <property type="match status" value="1"/>
</dbReference>
<dbReference type="FunFam" id="1.20.1250.20:FF:000079">
    <property type="entry name" value="Probable sugar efflux transporter"/>
    <property type="match status" value="1"/>
</dbReference>
<dbReference type="Gene3D" id="1.20.1250.20">
    <property type="entry name" value="MFS general substrate transporter like domains"/>
    <property type="match status" value="1"/>
</dbReference>
<dbReference type="HAMAP" id="MF_00517">
    <property type="entry name" value="MFS_SotB"/>
    <property type="match status" value="1"/>
</dbReference>
<dbReference type="InterPro" id="IPR011701">
    <property type="entry name" value="MFS"/>
</dbReference>
<dbReference type="InterPro" id="IPR020846">
    <property type="entry name" value="MFS_dom"/>
</dbReference>
<dbReference type="InterPro" id="IPR050189">
    <property type="entry name" value="MFS_Efflux_Transporters"/>
</dbReference>
<dbReference type="InterPro" id="IPR036259">
    <property type="entry name" value="MFS_trans_sf"/>
</dbReference>
<dbReference type="InterPro" id="IPR023495">
    <property type="entry name" value="Sugar_effux_transptr_put"/>
</dbReference>
<dbReference type="NCBIfam" id="NF002921">
    <property type="entry name" value="PRK03545.1"/>
    <property type="match status" value="1"/>
</dbReference>
<dbReference type="PANTHER" id="PTHR43124">
    <property type="entry name" value="PURINE EFFLUX PUMP PBUE"/>
    <property type="match status" value="1"/>
</dbReference>
<dbReference type="PANTHER" id="PTHR43124:SF4">
    <property type="entry name" value="SUGAR EFFLUX TRANSPORTER"/>
    <property type="match status" value="1"/>
</dbReference>
<dbReference type="Pfam" id="PF07690">
    <property type="entry name" value="MFS_1"/>
    <property type="match status" value="1"/>
</dbReference>
<dbReference type="SUPFAM" id="SSF103473">
    <property type="entry name" value="MFS general substrate transporter"/>
    <property type="match status" value="1"/>
</dbReference>
<dbReference type="PROSITE" id="PS50850">
    <property type="entry name" value="MFS"/>
    <property type="match status" value="1"/>
</dbReference>
<sequence length="396" mass="42547">MTTNTVSRKVAWLRVVTLAVAAFIFNTTEFVPVGLLSDIAHSFHMQTAQVGIMLTIYAWVVALMSLPFMLMTSQVERRKLLICLFVVFIASHVLSFLSWSFTVLVISRIGVAFAHAIFWSITASLAIRMAPAGKRAQALSLIATGTALAMVLGLPLGRIVGQYFGWRMTFFAIGIGALITLLCLIKLLPLLPSEHSGSLKSLPLLFRRPALMSIYLLTVVVVTAHYTAYSYIEPFVQNIAGFSANFATALLLLLGGAGIIGSVIFGKLGNQYASALVSTAIALLLVCLALLLPAANSEIHLGVLSIFWGIAMMIIGLGMQVKVLALAPDATDVAMALFSGIFNIGIGAGALVGNQVSLHWSMSMIGYVGAVPAFAALIWSIIIFRRWPVTLEEQTQ</sequence>
<accession>B7URQ4</accession>
<proteinExistence type="inferred from homology"/>
<evidence type="ECO:0000255" key="1">
    <source>
        <dbReference type="HAMAP-Rule" id="MF_00517"/>
    </source>
</evidence>
<keyword id="KW-0997">Cell inner membrane</keyword>
<keyword id="KW-1003">Cell membrane</keyword>
<keyword id="KW-0472">Membrane</keyword>
<keyword id="KW-1185">Reference proteome</keyword>
<keyword id="KW-0762">Sugar transport</keyword>
<keyword id="KW-0812">Transmembrane</keyword>
<keyword id="KW-1133">Transmembrane helix</keyword>
<keyword id="KW-0813">Transport</keyword>